<protein>
    <recommendedName>
        <fullName evidence="7">Large ribosomal subunit protein mL51</fullName>
    </recommendedName>
    <alternativeName>
        <fullName>39S ribosomal protein L51, mitochondrial</fullName>
        <shortName>L51mt</shortName>
        <shortName>MRP-L51</shortName>
    </alternativeName>
    <alternativeName>
        <fullName>bMRP-64</fullName>
        <shortName>bMRP64</shortName>
    </alternativeName>
</protein>
<gene>
    <name type="primary">MRPL51</name>
    <name type="synonym">MRP64</name>
    <name type="ORF">CDA09</name>
    <name type="ORF">HSPC241</name>
</gene>
<comment type="subunit">
    <text evidence="1 3 4 5 6">Component of the mitochondrial large ribosomal subunit (mt-LSU) (PubMed:25278503, PubMed:25838379, PubMed:28892042, PubMed:35177605). Mature mammalian 55S mitochondrial ribosomes consist of a small (28S) and a large (39S) subunit. The 28S small subunit contains a 12S ribosomal RNA (12S mt-rRNA) and 30 different proteins. The 39S large subunit contains a 16S rRNA (16S mt-rRNA), a copy of mitochondrial valine transfer RNA (mt-tRNA(Val)), which plays an integral structural role, and 52 different proteins (PubMed:25278503, PubMed:25838379). Interacts with OXA1L (By similarity).</text>
</comment>
<comment type="subcellular location">
    <subcellularLocation>
        <location evidence="3 4 5">Mitochondrion</location>
    </subcellularLocation>
</comment>
<comment type="similarity">
    <text evidence="8">Belongs to the mitochondrion-specific ribosomal protein mL51 family.</text>
</comment>
<feature type="transit peptide" description="Mitochondrion" evidence="2">
    <location>
        <begin position="1"/>
        <end position="31"/>
    </location>
</feature>
<feature type="chain" id="PRO_0000273082" description="Large ribosomal subunit protein mL51">
    <location>
        <begin position="32"/>
        <end position="128"/>
    </location>
</feature>
<feature type="sequence variant" id="VAR_030079" description="In dbSNP:rs9526.">
    <original>M</original>
    <variation>I</variation>
    <location>
        <position position="102"/>
    </location>
</feature>
<feature type="sequence conflict" description="In Ref. 3; AAF36161." evidence="8" ref="3">
    <original>W</original>
    <variation>R</variation>
    <location>
        <position position="79"/>
    </location>
</feature>
<feature type="helix" evidence="15">
    <location>
        <begin position="49"/>
        <end position="52"/>
    </location>
</feature>
<feature type="turn" evidence="15">
    <location>
        <begin position="53"/>
        <end position="59"/>
    </location>
</feature>
<feature type="helix" evidence="15">
    <location>
        <begin position="60"/>
        <end position="63"/>
    </location>
</feature>
<feature type="turn" evidence="15">
    <location>
        <begin position="64"/>
        <end position="66"/>
    </location>
</feature>
<feature type="helix" evidence="15">
    <location>
        <begin position="70"/>
        <end position="73"/>
    </location>
</feature>
<feature type="helix" evidence="15">
    <location>
        <begin position="78"/>
        <end position="80"/>
    </location>
</feature>
<feature type="helix" evidence="15">
    <location>
        <begin position="87"/>
        <end position="98"/>
    </location>
</feature>
<feature type="helix" evidence="15">
    <location>
        <begin position="99"/>
        <end position="101"/>
    </location>
</feature>
<feature type="helix" evidence="15">
    <location>
        <begin position="104"/>
        <end position="123"/>
    </location>
</feature>
<keyword id="KW-0002">3D-structure</keyword>
<keyword id="KW-0496">Mitochondrion</keyword>
<keyword id="KW-1267">Proteomics identification</keyword>
<keyword id="KW-1185">Reference proteome</keyword>
<keyword id="KW-0687">Ribonucleoprotein</keyword>
<keyword id="KW-0689">Ribosomal protein</keyword>
<keyword id="KW-0809">Transit peptide</keyword>
<name>RM51_HUMAN</name>
<organism>
    <name type="scientific">Homo sapiens</name>
    <name type="common">Human</name>
    <dbReference type="NCBI Taxonomy" id="9606"/>
    <lineage>
        <taxon>Eukaryota</taxon>
        <taxon>Metazoa</taxon>
        <taxon>Chordata</taxon>
        <taxon>Craniata</taxon>
        <taxon>Vertebrata</taxon>
        <taxon>Euteleostomi</taxon>
        <taxon>Mammalia</taxon>
        <taxon>Eutheria</taxon>
        <taxon>Euarchontoglires</taxon>
        <taxon>Primates</taxon>
        <taxon>Haplorrhini</taxon>
        <taxon>Catarrhini</taxon>
        <taxon>Hominidae</taxon>
        <taxon>Homo</taxon>
    </lineage>
</organism>
<reference key="1">
    <citation type="journal article" date="2001" name="J. Biol. Chem.">
        <title>Proteomic analysis of the mammalian mitochondrial ribosome. Identification of protein components in the 28S small subunit.</title>
        <authorList>
            <person name="Suzuki T."/>
            <person name="Terasaki M."/>
            <person name="Takemoto-Hori C."/>
            <person name="Hanada T."/>
            <person name="Ueda T."/>
            <person name="Wada A."/>
            <person name="Watanabe K."/>
        </authorList>
    </citation>
    <scope>NUCLEOTIDE SEQUENCE [MRNA]</scope>
</reference>
<reference key="2">
    <citation type="submission" date="1999-12" db="EMBL/GenBank/DDBJ databases">
        <title>A novel gene expressed in human pheochromocytoma.</title>
        <authorList>
            <person name="Li Y."/>
            <person name="Huang Q."/>
            <person name="Peng Y."/>
            <person name="Song H."/>
            <person name="Yu Y."/>
            <person name="Xu S."/>
            <person name="Ren S."/>
            <person name="Chen Z."/>
            <person name="Han Z."/>
        </authorList>
    </citation>
    <scope>NUCLEOTIDE SEQUENCE [LARGE SCALE MRNA]</scope>
    <source>
        <tissue>Pheochromocytoma</tissue>
    </source>
</reference>
<reference key="3">
    <citation type="journal article" date="2000" name="Genome Res.">
        <title>Cloning and functional analysis of cDNAs with open reading frames for 300 previously undefined genes expressed in CD34+ hematopoietic stem/progenitor cells.</title>
        <authorList>
            <person name="Zhang Q.-H."/>
            <person name="Ye M."/>
            <person name="Wu X.-Y."/>
            <person name="Ren S.-X."/>
            <person name="Zhao M."/>
            <person name="Zhao C.-J."/>
            <person name="Fu G."/>
            <person name="Shen Y."/>
            <person name="Fan H.-Y."/>
            <person name="Lu G."/>
            <person name="Zhong M."/>
            <person name="Xu X.-R."/>
            <person name="Han Z.-G."/>
            <person name="Zhang J.-W."/>
            <person name="Tao J."/>
            <person name="Huang Q.-H."/>
            <person name="Zhou J."/>
            <person name="Hu G.-X."/>
            <person name="Gu J."/>
            <person name="Chen S.-J."/>
            <person name="Chen Z."/>
        </authorList>
    </citation>
    <scope>NUCLEOTIDE SEQUENCE [LARGE SCALE MRNA]</scope>
    <source>
        <tissue>Umbilical cord blood</tissue>
    </source>
</reference>
<reference key="4">
    <citation type="journal article" date="2004" name="Genome Res.">
        <title>The status, quality, and expansion of the NIH full-length cDNA project: the Mammalian Gene Collection (MGC).</title>
        <authorList>
            <consortium name="The MGC Project Team"/>
        </authorList>
    </citation>
    <scope>NUCLEOTIDE SEQUENCE [LARGE SCALE MRNA]</scope>
    <source>
        <tissue>Eye</tissue>
        <tissue>Testis</tissue>
    </source>
</reference>
<reference key="5">
    <citation type="journal article" date="2001" name="Genomics">
        <title>The human mitochondrial ribosomal protein genes: mapping of 54 genes to the chromosomes and implications for human disorders.</title>
        <authorList>
            <person name="Kenmochi N."/>
            <person name="Suzuki T."/>
            <person name="Uechi T."/>
            <person name="Magoori M."/>
            <person name="Kuniba M."/>
            <person name="Higa S."/>
            <person name="Watanabe K."/>
            <person name="Tanaka T."/>
        </authorList>
    </citation>
    <scope>NUCLEOTIDE SEQUENCE [GENOMIC DNA] OF 42-63</scope>
</reference>
<reference key="6">
    <citation type="journal article" date="2001" name="J. Biol. Chem.">
        <title>The large subunit of the mammalian mitochondrial ribosome. Analysis of the complement of ribosomal proteins present.</title>
        <authorList>
            <person name="Koc E.C."/>
            <person name="Burkhart W."/>
            <person name="Blackburn K."/>
            <person name="Moyer M.B."/>
            <person name="Schlatzer D.M."/>
            <person name="Moseley A."/>
            <person name="Spremulli L.L."/>
        </authorList>
    </citation>
    <scope>IDENTIFICATION</scope>
</reference>
<reference key="7">
    <citation type="journal article" date="2011" name="BMC Syst. Biol.">
        <title>Initial characterization of the human central proteome.</title>
        <authorList>
            <person name="Burkard T.R."/>
            <person name="Planyavsky M."/>
            <person name="Kaupe I."/>
            <person name="Breitwieser F.P."/>
            <person name="Buerckstuemmer T."/>
            <person name="Bennett K.L."/>
            <person name="Superti-Furga G."/>
            <person name="Colinge J."/>
        </authorList>
    </citation>
    <scope>IDENTIFICATION BY MASS SPECTROMETRY [LARGE SCALE ANALYSIS]</scope>
</reference>
<reference key="8">
    <citation type="journal article" date="2015" name="Proteomics">
        <title>N-terminome analysis of the human mitochondrial proteome.</title>
        <authorList>
            <person name="Vaca Jacome A.S."/>
            <person name="Rabilloud T."/>
            <person name="Schaeffer-Reiss C."/>
            <person name="Rompais M."/>
            <person name="Ayoub D."/>
            <person name="Lane L."/>
            <person name="Bairoch A."/>
            <person name="Van Dorsselaer A."/>
            <person name="Carapito C."/>
        </authorList>
    </citation>
    <scope>IDENTIFICATION BY MASS SPECTROMETRY [LARGE SCALE ANALYSIS]</scope>
</reference>
<reference evidence="9" key="9">
    <citation type="journal article" date="2014" name="Science">
        <title>Structure of the large ribosomal subunit from human mitochondria.</title>
        <authorList>
            <person name="Brown A."/>
            <person name="Amunts A."/>
            <person name="Bai X.C."/>
            <person name="Sugimoto Y."/>
            <person name="Edwards P.C."/>
            <person name="Murshudov G."/>
            <person name="Scheres S.H."/>
            <person name="Ramakrishnan V."/>
        </authorList>
    </citation>
    <scope>STRUCTURE BY ELECTRON MICROSCOPY (3.40 ANGSTROMS)</scope>
    <scope>SUBCELLULAR LOCATION</scope>
    <scope>SUBUNIT</scope>
</reference>
<reference evidence="10" key="10">
    <citation type="journal article" date="2015" name="Science">
        <title>Ribosome. The structure of the human mitochondrial ribosome.</title>
        <authorList>
            <person name="Amunts A."/>
            <person name="Brown A."/>
            <person name="Toots J."/>
            <person name="Scheres S.H."/>
            <person name="Ramakrishnan V."/>
        </authorList>
    </citation>
    <scope>STRUCTURE BY ELECTRON MICROSCOPY (3.50 ANGSTROMS)</scope>
    <scope>SUBCELLULAR LOCATION</scope>
    <scope>SUBUNIT</scope>
</reference>
<reference evidence="11 12" key="11">
    <citation type="journal article" date="2017" name="Nat. Struct. Mol. Biol.">
        <title>Structures of the human mitochondrial ribosome in native states of assembly.</title>
        <authorList>
            <person name="Brown A."/>
            <person name="Rathore S."/>
            <person name="Kimanius D."/>
            <person name="Aibara S."/>
            <person name="Bai X.C."/>
            <person name="Rorbach J."/>
            <person name="Amunts A."/>
            <person name="Ramakrishnan V."/>
        </authorList>
    </citation>
    <scope>STRUCTURE BY ELECTRON MICROSCOPY (3.03 ANGSTROMS)</scope>
    <scope>SUBCELLULAR LOCATION</scope>
    <scope>SUBUNIT</scope>
</reference>
<reference evidence="13 14" key="12">
    <citation type="journal article" date="2022" name="Nat. Commun.">
        <title>A late-stage assembly checkpoint of the human mitochondrial ribosome large subunit.</title>
        <authorList>
            <person name="Rebelo-Guiomar P."/>
            <person name="Pellegrino S."/>
            <person name="Dent K.C."/>
            <person name="Sas-Chen A."/>
            <person name="Miller-Fleming L."/>
            <person name="Garone C."/>
            <person name="Van Haute L."/>
            <person name="Rogan J.F."/>
            <person name="Dinan A."/>
            <person name="Firth A.E."/>
            <person name="Andrews B."/>
            <person name="Whitworth A.J."/>
            <person name="Schwartz S."/>
            <person name="Warren A.J."/>
            <person name="Minczuk M."/>
        </authorList>
    </citation>
    <scope>STRUCTURE BY ELECTRON MICROSCOPY (2.9 ANGSTROMS) IN COMPLEX WITH MTLSU</scope>
    <scope>SUBUNIT</scope>
</reference>
<accession>Q4U2R6</accession>
<accession>Q96Q57</accession>
<accession>Q9BQ36</accession>
<accession>Q9P0N7</accession>
<evidence type="ECO:0000250" key="1">
    <source>
        <dbReference type="UniProtKB" id="P0C2B6"/>
    </source>
</evidence>
<evidence type="ECO:0000255" key="2"/>
<evidence type="ECO:0000269" key="3">
    <source>
    </source>
</evidence>
<evidence type="ECO:0000269" key="4">
    <source>
    </source>
</evidence>
<evidence type="ECO:0000269" key="5">
    <source>
    </source>
</evidence>
<evidence type="ECO:0000269" key="6">
    <source>
    </source>
</evidence>
<evidence type="ECO:0000303" key="7">
    <source>
    </source>
</evidence>
<evidence type="ECO:0000305" key="8"/>
<evidence type="ECO:0007744" key="9">
    <source>
        <dbReference type="PDB" id="3J7Y"/>
    </source>
</evidence>
<evidence type="ECO:0007744" key="10">
    <source>
        <dbReference type="PDB" id="3J9M"/>
    </source>
</evidence>
<evidence type="ECO:0007744" key="11">
    <source>
        <dbReference type="PDB" id="5OOL"/>
    </source>
</evidence>
<evidence type="ECO:0007744" key="12">
    <source>
        <dbReference type="PDB" id="5OOM"/>
    </source>
</evidence>
<evidence type="ECO:0007744" key="13">
    <source>
        <dbReference type="PDB" id="7QH6"/>
    </source>
</evidence>
<evidence type="ECO:0007744" key="14">
    <source>
        <dbReference type="PDB" id="7QH7"/>
    </source>
</evidence>
<evidence type="ECO:0007829" key="15">
    <source>
        <dbReference type="PDB" id="7OF0"/>
    </source>
</evidence>
<dbReference type="EMBL" id="AB049959">
    <property type="protein sequence ID" value="BAB41012.1"/>
    <property type="molecule type" value="mRNA"/>
</dbReference>
<dbReference type="EMBL" id="AF212248">
    <property type="protein sequence ID" value="AAK14931.1"/>
    <property type="molecule type" value="mRNA"/>
</dbReference>
<dbReference type="EMBL" id="AF151075">
    <property type="protein sequence ID" value="AAF36161.1"/>
    <property type="molecule type" value="mRNA"/>
</dbReference>
<dbReference type="EMBL" id="BC000191">
    <property type="protein sequence ID" value="AAH00191.1"/>
    <property type="molecule type" value="mRNA"/>
</dbReference>
<dbReference type="EMBL" id="BC014329">
    <property type="protein sequence ID" value="AAH14329.1"/>
    <property type="molecule type" value="mRNA"/>
</dbReference>
<dbReference type="EMBL" id="AB051355">
    <property type="protein sequence ID" value="BAB54944.1"/>
    <property type="molecule type" value="Genomic_DNA"/>
</dbReference>
<dbReference type="CCDS" id="CCDS8547.1"/>
<dbReference type="RefSeq" id="NP_057581.2">
    <property type="nucleotide sequence ID" value="NM_016497.3"/>
</dbReference>
<dbReference type="PDB" id="3J7Y">
    <property type="method" value="EM"/>
    <property type="resolution" value="3.40 A"/>
    <property type="chains" value="i=1-128"/>
</dbReference>
<dbReference type="PDB" id="3J9M">
    <property type="method" value="EM"/>
    <property type="resolution" value="3.50 A"/>
    <property type="chains" value="i=1-128"/>
</dbReference>
<dbReference type="PDB" id="5OOL">
    <property type="method" value="EM"/>
    <property type="resolution" value="3.06 A"/>
    <property type="chains" value="i=1-128"/>
</dbReference>
<dbReference type="PDB" id="5OOM">
    <property type="method" value="EM"/>
    <property type="resolution" value="3.03 A"/>
    <property type="chains" value="i=1-128"/>
</dbReference>
<dbReference type="PDB" id="6I9R">
    <property type="method" value="EM"/>
    <property type="resolution" value="3.90 A"/>
    <property type="chains" value="i=1-128"/>
</dbReference>
<dbReference type="PDB" id="6NU2">
    <property type="method" value="EM"/>
    <property type="resolution" value="3.90 A"/>
    <property type="chains" value="i=32-128"/>
</dbReference>
<dbReference type="PDB" id="6NU3">
    <property type="method" value="EM"/>
    <property type="resolution" value="4.40 A"/>
    <property type="chains" value="i=1-128"/>
</dbReference>
<dbReference type="PDB" id="6VLZ">
    <property type="method" value="EM"/>
    <property type="resolution" value="2.97 A"/>
    <property type="chains" value="i=1-128"/>
</dbReference>
<dbReference type="PDB" id="6VMI">
    <property type="method" value="EM"/>
    <property type="resolution" value="2.96 A"/>
    <property type="chains" value="i=1-128"/>
</dbReference>
<dbReference type="PDB" id="6ZM5">
    <property type="method" value="EM"/>
    <property type="resolution" value="2.89 A"/>
    <property type="chains" value="i=1-128"/>
</dbReference>
<dbReference type="PDB" id="6ZM6">
    <property type="method" value="EM"/>
    <property type="resolution" value="2.59 A"/>
    <property type="chains" value="i=1-128"/>
</dbReference>
<dbReference type="PDB" id="6ZS9">
    <property type="method" value="EM"/>
    <property type="resolution" value="4.00 A"/>
    <property type="chains" value="i=1-128"/>
</dbReference>
<dbReference type="PDB" id="6ZSA">
    <property type="method" value="EM"/>
    <property type="resolution" value="4.00 A"/>
    <property type="chains" value="i=1-128"/>
</dbReference>
<dbReference type="PDB" id="6ZSB">
    <property type="method" value="EM"/>
    <property type="resolution" value="4.50 A"/>
    <property type="chains" value="i=1-128"/>
</dbReference>
<dbReference type="PDB" id="6ZSC">
    <property type="method" value="EM"/>
    <property type="resolution" value="3.50 A"/>
    <property type="chains" value="i=1-128"/>
</dbReference>
<dbReference type="PDB" id="6ZSD">
    <property type="method" value="EM"/>
    <property type="resolution" value="3.70 A"/>
    <property type="chains" value="i=1-128"/>
</dbReference>
<dbReference type="PDB" id="6ZSE">
    <property type="method" value="EM"/>
    <property type="resolution" value="5.00 A"/>
    <property type="chains" value="i=1-128"/>
</dbReference>
<dbReference type="PDB" id="6ZSG">
    <property type="method" value="EM"/>
    <property type="resolution" value="4.00 A"/>
    <property type="chains" value="i=1-128"/>
</dbReference>
<dbReference type="PDB" id="7A5F">
    <property type="method" value="EM"/>
    <property type="resolution" value="4.40 A"/>
    <property type="chains" value="i3=1-128"/>
</dbReference>
<dbReference type="PDB" id="7A5G">
    <property type="method" value="EM"/>
    <property type="resolution" value="4.33 A"/>
    <property type="chains" value="i3=1-128"/>
</dbReference>
<dbReference type="PDB" id="7A5H">
    <property type="method" value="EM"/>
    <property type="resolution" value="3.30 A"/>
    <property type="chains" value="i=1-128"/>
</dbReference>
<dbReference type="PDB" id="7A5I">
    <property type="method" value="EM"/>
    <property type="resolution" value="3.70 A"/>
    <property type="chains" value="i3=1-128"/>
</dbReference>
<dbReference type="PDB" id="7A5J">
    <property type="method" value="EM"/>
    <property type="resolution" value="3.10 A"/>
    <property type="chains" value="i=1-128"/>
</dbReference>
<dbReference type="PDB" id="7A5K">
    <property type="method" value="EM"/>
    <property type="resolution" value="3.70 A"/>
    <property type="chains" value="i3=1-128"/>
</dbReference>
<dbReference type="PDB" id="7L08">
    <property type="method" value="EM"/>
    <property type="resolution" value="3.49 A"/>
    <property type="chains" value="i=1-128"/>
</dbReference>
<dbReference type="PDB" id="7L20">
    <property type="method" value="EM"/>
    <property type="resolution" value="3.15 A"/>
    <property type="chains" value="i=1-128"/>
</dbReference>
<dbReference type="PDB" id="7O9K">
    <property type="method" value="EM"/>
    <property type="resolution" value="3.10 A"/>
    <property type="chains" value="i=1-128"/>
</dbReference>
<dbReference type="PDB" id="7O9M">
    <property type="method" value="EM"/>
    <property type="resolution" value="2.50 A"/>
    <property type="chains" value="i=1-128"/>
</dbReference>
<dbReference type="PDB" id="7ODR">
    <property type="method" value="EM"/>
    <property type="resolution" value="2.90 A"/>
    <property type="chains" value="i=1-128"/>
</dbReference>
<dbReference type="PDB" id="7ODS">
    <property type="method" value="EM"/>
    <property type="resolution" value="3.10 A"/>
    <property type="chains" value="i=1-128"/>
</dbReference>
<dbReference type="PDB" id="7ODT">
    <property type="method" value="EM"/>
    <property type="resolution" value="3.10 A"/>
    <property type="chains" value="i=1-128"/>
</dbReference>
<dbReference type="PDB" id="7OF0">
    <property type="method" value="EM"/>
    <property type="resolution" value="2.20 A"/>
    <property type="chains" value="i=1-128"/>
</dbReference>
<dbReference type="PDB" id="7OF2">
    <property type="method" value="EM"/>
    <property type="resolution" value="2.70 A"/>
    <property type="chains" value="i=1-128"/>
</dbReference>
<dbReference type="PDB" id="7OF3">
    <property type="method" value="EM"/>
    <property type="resolution" value="2.70 A"/>
    <property type="chains" value="i=1-128"/>
</dbReference>
<dbReference type="PDB" id="7OF4">
    <property type="method" value="EM"/>
    <property type="resolution" value="2.70 A"/>
    <property type="chains" value="i=1-128"/>
</dbReference>
<dbReference type="PDB" id="7OF5">
    <property type="method" value="EM"/>
    <property type="resolution" value="2.90 A"/>
    <property type="chains" value="i=1-128"/>
</dbReference>
<dbReference type="PDB" id="7OF6">
    <property type="method" value="EM"/>
    <property type="resolution" value="2.60 A"/>
    <property type="chains" value="i=1-128"/>
</dbReference>
<dbReference type="PDB" id="7OF7">
    <property type="method" value="EM"/>
    <property type="resolution" value="2.50 A"/>
    <property type="chains" value="i=1-128"/>
</dbReference>
<dbReference type="PDB" id="7OG4">
    <property type="method" value="EM"/>
    <property type="resolution" value="3.80 A"/>
    <property type="chains" value="i=1-128"/>
</dbReference>
<dbReference type="PDB" id="7OI6">
    <property type="method" value="EM"/>
    <property type="resolution" value="5.70 A"/>
    <property type="chains" value="i=1-128"/>
</dbReference>
<dbReference type="PDB" id="7OI7">
    <property type="method" value="EM"/>
    <property type="resolution" value="3.50 A"/>
    <property type="chains" value="i=1-128"/>
</dbReference>
<dbReference type="PDB" id="7OI8">
    <property type="method" value="EM"/>
    <property type="resolution" value="3.50 A"/>
    <property type="chains" value="i=1-128"/>
</dbReference>
<dbReference type="PDB" id="7OI9">
    <property type="method" value="EM"/>
    <property type="resolution" value="3.30 A"/>
    <property type="chains" value="i=1-128"/>
</dbReference>
<dbReference type="PDB" id="7OIA">
    <property type="method" value="EM"/>
    <property type="resolution" value="3.20 A"/>
    <property type="chains" value="i=1-128"/>
</dbReference>
<dbReference type="PDB" id="7OIB">
    <property type="method" value="EM"/>
    <property type="resolution" value="3.30 A"/>
    <property type="chains" value="i=1-128"/>
</dbReference>
<dbReference type="PDB" id="7OIC">
    <property type="method" value="EM"/>
    <property type="resolution" value="3.10 A"/>
    <property type="chains" value="i=1-128"/>
</dbReference>
<dbReference type="PDB" id="7OID">
    <property type="method" value="EM"/>
    <property type="resolution" value="3.70 A"/>
    <property type="chains" value="i=1-128"/>
</dbReference>
<dbReference type="PDB" id="7OIE">
    <property type="method" value="EM"/>
    <property type="resolution" value="3.50 A"/>
    <property type="chains" value="i=1-128"/>
</dbReference>
<dbReference type="PDB" id="7PD3">
    <property type="method" value="EM"/>
    <property type="resolution" value="3.40 A"/>
    <property type="chains" value="i=1-128"/>
</dbReference>
<dbReference type="PDB" id="7PO4">
    <property type="method" value="EM"/>
    <property type="resolution" value="2.56 A"/>
    <property type="chains" value="i=1-128"/>
</dbReference>
<dbReference type="PDB" id="7QH6">
    <property type="method" value="EM"/>
    <property type="resolution" value="3.08 A"/>
    <property type="chains" value="i=1-128"/>
</dbReference>
<dbReference type="PDB" id="7QH7">
    <property type="method" value="EM"/>
    <property type="resolution" value="2.89 A"/>
    <property type="chains" value="i=32-128"/>
</dbReference>
<dbReference type="PDB" id="7QI4">
    <property type="method" value="EM"/>
    <property type="resolution" value="2.21 A"/>
    <property type="chains" value="i=1-128"/>
</dbReference>
<dbReference type="PDB" id="7QI5">
    <property type="method" value="EM"/>
    <property type="resolution" value="2.63 A"/>
    <property type="chains" value="i=1-128"/>
</dbReference>
<dbReference type="PDB" id="7QI6">
    <property type="method" value="EM"/>
    <property type="resolution" value="2.98 A"/>
    <property type="chains" value="i=1-128"/>
</dbReference>
<dbReference type="PDB" id="8ANY">
    <property type="method" value="EM"/>
    <property type="resolution" value="2.85 A"/>
    <property type="chains" value="i=1-128"/>
</dbReference>
<dbReference type="PDB" id="8K2A">
    <property type="method" value="EM"/>
    <property type="resolution" value="2.90 A"/>
    <property type="chains" value="Ly=1-128"/>
</dbReference>
<dbReference type="PDB" id="8K2B">
    <property type="method" value="EM"/>
    <property type="resolution" value="3.40 A"/>
    <property type="chains" value="Ly=1-128"/>
</dbReference>
<dbReference type="PDB" id="8OIR">
    <property type="method" value="EM"/>
    <property type="resolution" value="3.10 A"/>
    <property type="chains" value="Bz=1-128"/>
</dbReference>
<dbReference type="PDB" id="8OIT">
    <property type="method" value="EM"/>
    <property type="resolution" value="2.90 A"/>
    <property type="chains" value="Bz=1-128"/>
</dbReference>
<dbReference type="PDB" id="8PK0">
    <property type="method" value="EM"/>
    <property type="resolution" value="3.03 A"/>
    <property type="chains" value="i=1-128"/>
</dbReference>
<dbReference type="PDB" id="8QSJ">
    <property type="method" value="EM"/>
    <property type="resolution" value="3.00 A"/>
    <property type="chains" value="i=1-128"/>
</dbReference>
<dbReference type="PDB" id="8QU5">
    <property type="method" value="EM"/>
    <property type="resolution" value="2.42 A"/>
    <property type="chains" value="i=1-128"/>
</dbReference>
<dbReference type="PDB" id="8RRI">
    <property type="method" value="EM"/>
    <property type="resolution" value="2.40 A"/>
    <property type="chains" value="i=1-128"/>
</dbReference>
<dbReference type="PDB" id="8XT0">
    <property type="method" value="EM"/>
    <property type="resolution" value="3.20 A"/>
    <property type="chains" value="Ly=1-128"/>
</dbReference>
<dbReference type="PDB" id="8XT1">
    <property type="method" value="EM"/>
    <property type="resolution" value="3.10 A"/>
    <property type="chains" value="Ly=1-128"/>
</dbReference>
<dbReference type="PDB" id="8XT2">
    <property type="method" value="EM"/>
    <property type="resolution" value="3.30 A"/>
    <property type="chains" value="Ly=1-128"/>
</dbReference>
<dbReference type="PDB" id="8XT3">
    <property type="method" value="EM"/>
    <property type="resolution" value="3.10 A"/>
    <property type="chains" value="Ly=1-128"/>
</dbReference>
<dbReference type="PDBsum" id="3J7Y"/>
<dbReference type="PDBsum" id="3J9M"/>
<dbReference type="PDBsum" id="5OOL"/>
<dbReference type="PDBsum" id="5OOM"/>
<dbReference type="PDBsum" id="6I9R"/>
<dbReference type="PDBsum" id="6NU2"/>
<dbReference type="PDBsum" id="6NU3"/>
<dbReference type="PDBsum" id="6VLZ"/>
<dbReference type="PDBsum" id="6VMI"/>
<dbReference type="PDBsum" id="6ZM5"/>
<dbReference type="PDBsum" id="6ZM6"/>
<dbReference type="PDBsum" id="6ZS9"/>
<dbReference type="PDBsum" id="6ZSA"/>
<dbReference type="PDBsum" id="6ZSB"/>
<dbReference type="PDBsum" id="6ZSC"/>
<dbReference type="PDBsum" id="6ZSD"/>
<dbReference type="PDBsum" id="6ZSE"/>
<dbReference type="PDBsum" id="6ZSG"/>
<dbReference type="PDBsum" id="7A5F"/>
<dbReference type="PDBsum" id="7A5G"/>
<dbReference type="PDBsum" id="7A5H"/>
<dbReference type="PDBsum" id="7A5I"/>
<dbReference type="PDBsum" id="7A5J"/>
<dbReference type="PDBsum" id="7A5K"/>
<dbReference type="PDBsum" id="7L08"/>
<dbReference type="PDBsum" id="7L20"/>
<dbReference type="PDBsum" id="7O9K"/>
<dbReference type="PDBsum" id="7O9M"/>
<dbReference type="PDBsum" id="7ODR"/>
<dbReference type="PDBsum" id="7ODS"/>
<dbReference type="PDBsum" id="7ODT"/>
<dbReference type="PDBsum" id="7OF0"/>
<dbReference type="PDBsum" id="7OF2"/>
<dbReference type="PDBsum" id="7OF3"/>
<dbReference type="PDBsum" id="7OF4"/>
<dbReference type="PDBsum" id="7OF5"/>
<dbReference type="PDBsum" id="7OF6"/>
<dbReference type="PDBsum" id="7OF7"/>
<dbReference type="PDBsum" id="7OG4"/>
<dbReference type="PDBsum" id="7OI6"/>
<dbReference type="PDBsum" id="7OI7"/>
<dbReference type="PDBsum" id="7OI8"/>
<dbReference type="PDBsum" id="7OI9"/>
<dbReference type="PDBsum" id="7OIA"/>
<dbReference type="PDBsum" id="7OIB"/>
<dbReference type="PDBsum" id="7OIC"/>
<dbReference type="PDBsum" id="7OID"/>
<dbReference type="PDBsum" id="7OIE"/>
<dbReference type="PDBsum" id="7PD3"/>
<dbReference type="PDBsum" id="7PO4"/>
<dbReference type="PDBsum" id="7QH6"/>
<dbReference type="PDBsum" id="7QH7"/>
<dbReference type="PDBsum" id="7QI4"/>
<dbReference type="PDBsum" id="7QI5"/>
<dbReference type="PDBsum" id="7QI6"/>
<dbReference type="PDBsum" id="8ANY"/>
<dbReference type="PDBsum" id="8K2A"/>
<dbReference type="PDBsum" id="8K2B"/>
<dbReference type="PDBsum" id="8OIR"/>
<dbReference type="PDBsum" id="8OIT"/>
<dbReference type="PDBsum" id="8PK0"/>
<dbReference type="PDBsum" id="8QSJ"/>
<dbReference type="PDBsum" id="8QU5"/>
<dbReference type="PDBsum" id="8RRI"/>
<dbReference type="PDBsum" id="8XT0"/>
<dbReference type="PDBsum" id="8XT1"/>
<dbReference type="PDBsum" id="8XT2"/>
<dbReference type="PDBsum" id="8XT3"/>
<dbReference type="EMDB" id="EMD-0514"/>
<dbReference type="EMDB" id="EMD-0515"/>
<dbReference type="EMDB" id="EMD-11278"/>
<dbReference type="EMDB" id="EMD-11279"/>
<dbReference type="EMDB" id="EMD-11390"/>
<dbReference type="EMDB" id="EMD-11391"/>
<dbReference type="EMDB" id="EMD-11392"/>
<dbReference type="EMDB" id="EMD-11393"/>
<dbReference type="EMDB" id="EMD-11394"/>
<dbReference type="EMDB" id="EMD-11395"/>
<dbReference type="EMDB" id="EMD-11397"/>
<dbReference type="EMDB" id="EMD-11641"/>
<dbReference type="EMDB" id="EMD-11642"/>
<dbReference type="EMDB" id="EMD-11643"/>
<dbReference type="EMDB" id="EMD-11644"/>
<dbReference type="EMDB" id="EMD-11645"/>
<dbReference type="EMDB" id="EMD-11646"/>
<dbReference type="EMDB" id="EMD-12763"/>
<dbReference type="EMDB" id="EMD-12764"/>
<dbReference type="EMDB" id="EMD-12845"/>
<dbReference type="EMDB" id="EMD-12846"/>
<dbReference type="EMDB" id="EMD-12847"/>
<dbReference type="EMDB" id="EMD-12865"/>
<dbReference type="EMDB" id="EMD-12867"/>
<dbReference type="EMDB" id="EMD-12868"/>
<dbReference type="EMDB" id="EMD-12869"/>
<dbReference type="EMDB" id="EMD-12870"/>
<dbReference type="EMDB" id="EMD-12871"/>
<dbReference type="EMDB" id="EMD-12872"/>
<dbReference type="EMDB" id="EMD-12877"/>
<dbReference type="EMDB" id="EMD-12919"/>
<dbReference type="EMDB" id="EMD-12920"/>
<dbReference type="EMDB" id="EMD-12921"/>
<dbReference type="EMDB" id="EMD-12922"/>
<dbReference type="EMDB" id="EMD-12923"/>
<dbReference type="EMDB" id="EMD-12924"/>
<dbReference type="EMDB" id="EMD-12925"/>
<dbReference type="EMDB" id="EMD-12926"/>
<dbReference type="EMDB" id="EMD-12927"/>
<dbReference type="EMDB" id="EMD-13329"/>
<dbReference type="EMDB" id="EMD-13562"/>
<dbReference type="EMDB" id="EMD-13965"/>
<dbReference type="EMDB" id="EMD-13967"/>
<dbReference type="EMDB" id="EMD-13980"/>
<dbReference type="EMDB" id="EMD-13981"/>
<dbReference type="EMDB" id="EMD-13982"/>
<dbReference type="EMDB" id="EMD-15544"/>
<dbReference type="EMDB" id="EMD-16897"/>
<dbReference type="EMDB" id="EMD-16899"/>
<dbReference type="EMDB" id="EMD-17719"/>
<dbReference type="EMDB" id="EMD-19460"/>
<dbReference type="EMDB" id="EMD-21233"/>
<dbReference type="EMDB" id="EMD-21242"/>
<dbReference type="EMDB" id="EMD-23096"/>
<dbReference type="EMDB" id="EMD-23121"/>
<dbReference type="EMDB" id="EMD-36836"/>
<dbReference type="EMDB" id="EMD-36837"/>
<dbReference type="EMDB" id="EMD-3842"/>
<dbReference type="EMDB" id="EMD-3843"/>
<dbReference type="EMDB" id="EMD-38632"/>
<dbReference type="EMDB" id="EMD-38633"/>
<dbReference type="EMDB" id="EMD-38634"/>
<dbReference type="EMDB" id="EMD-38635"/>
<dbReference type="EMDB" id="EMD-4434"/>
<dbReference type="SMR" id="Q4U2R6"/>
<dbReference type="BioGRID" id="119414">
    <property type="interactions" value="145"/>
</dbReference>
<dbReference type="ComplexPortal" id="CPX-5226">
    <property type="entry name" value="39S mitochondrial large ribosomal subunit"/>
</dbReference>
<dbReference type="CORUM" id="Q4U2R6"/>
<dbReference type="FunCoup" id="Q4U2R6">
    <property type="interactions" value="880"/>
</dbReference>
<dbReference type="IntAct" id="Q4U2R6">
    <property type="interactions" value="102"/>
</dbReference>
<dbReference type="MINT" id="Q4U2R6"/>
<dbReference type="STRING" id="9606.ENSP00000229238"/>
<dbReference type="BioMuta" id="MRPL51"/>
<dbReference type="DMDM" id="74762954"/>
<dbReference type="jPOST" id="Q4U2R6"/>
<dbReference type="MassIVE" id="Q4U2R6"/>
<dbReference type="PaxDb" id="9606-ENSP00000229238"/>
<dbReference type="PeptideAtlas" id="Q4U2R6"/>
<dbReference type="ProteomicsDB" id="62262"/>
<dbReference type="Pumba" id="Q4U2R6"/>
<dbReference type="TopDownProteomics" id="Q4U2R6"/>
<dbReference type="Antibodypedia" id="22416">
    <property type="antibodies" value="153 antibodies from 24 providers"/>
</dbReference>
<dbReference type="DNASU" id="51258"/>
<dbReference type="Ensembl" id="ENST00000229238.5">
    <property type="protein sequence ID" value="ENSP00000229238.3"/>
    <property type="gene ID" value="ENSG00000111639.8"/>
</dbReference>
<dbReference type="GeneID" id="51258"/>
<dbReference type="KEGG" id="hsa:51258"/>
<dbReference type="MANE-Select" id="ENST00000229238.5">
    <property type="protein sequence ID" value="ENSP00000229238.3"/>
    <property type="RefSeq nucleotide sequence ID" value="NM_016497.4"/>
    <property type="RefSeq protein sequence ID" value="NP_057581.2"/>
</dbReference>
<dbReference type="UCSC" id="uc001qom.3">
    <property type="organism name" value="human"/>
</dbReference>
<dbReference type="AGR" id="HGNC:14044"/>
<dbReference type="CTD" id="51258"/>
<dbReference type="GeneCards" id="MRPL51"/>
<dbReference type="HGNC" id="HGNC:14044">
    <property type="gene designation" value="MRPL51"/>
</dbReference>
<dbReference type="HPA" id="ENSG00000111639">
    <property type="expression patterns" value="Low tissue specificity"/>
</dbReference>
<dbReference type="MIM" id="611855">
    <property type="type" value="gene"/>
</dbReference>
<dbReference type="neXtProt" id="NX_Q4U2R6"/>
<dbReference type="OpenTargets" id="ENSG00000111639"/>
<dbReference type="PharmGKB" id="PA30984"/>
<dbReference type="VEuPathDB" id="HostDB:ENSG00000111639"/>
<dbReference type="eggNOG" id="KOG4045">
    <property type="taxonomic scope" value="Eukaryota"/>
</dbReference>
<dbReference type="GeneTree" id="ENSGT00390000018821"/>
<dbReference type="HOGENOM" id="CLU_150741_0_0_1"/>
<dbReference type="InParanoid" id="Q4U2R6"/>
<dbReference type="OMA" id="LIIAPCW"/>
<dbReference type="OrthoDB" id="10059330at2759"/>
<dbReference type="PAN-GO" id="Q4U2R6">
    <property type="GO annotations" value="3 GO annotations based on evolutionary models"/>
</dbReference>
<dbReference type="PhylomeDB" id="Q4U2R6"/>
<dbReference type="TreeFam" id="TF106130"/>
<dbReference type="PathwayCommons" id="Q4U2R6"/>
<dbReference type="Reactome" id="R-HSA-5368286">
    <property type="pathway name" value="Mitochondrial translation initiation"/>
</dbReference>
<dbReference type="Reactome" id="R-HSA-5389840">
    <property type="pathway name" value="Mitochondrial translation elongation"/>
</dbReference>
<dbReference type="Reactome" id="R-HSA-5419276">
    <property type="pathway name" value="Mitochondrial translation termination"/>
</dbReference>
<dbReference type="SignaLink" id="Q4U2R6"/>
<dbReference type="SIGNOR" id="Q4U2R6"/>
<dbReference type="BioGRID-ORCS" id="51258">
    <property type="hits" value="265 hits in 1162 CRISPR screens"/>
</dbReference>
<dbReference type="ChiTaRS" id="MRPL51">
    <property type="organism name" value="human"/>
</dbReference>
<dbReference type="EvolutionaryTrace" id="Q4U2R6"/>
<dbReference type="GenomeRNAi" id="51258"/>
<dbReference type="Pharos" id="Q4U2R6">
    <property type="development level" value="Tdark"/>
</dbReference>
<dbReference type="PRO" id="PR:Q4U2R6"/>
<dbReference type="Proteomes" id="UP000005640">
    <property type="component" value="Chromosome 12"/>
</dbReference>
<dbReference type="RNAct" id="Q4U2R6">
    <property type="molecule type" value="protein"/>
</dbReference>
<dbReference type="Bgee" id="ENSG00000111639">
    <property type="expression patterns" value="Expressed in left ventricle myocardium and 185 other cell types or tissues"/>
</dbReference>
<dbReference type="ExpressionAtlas" id="Q4U2R6">
    <property type="expression patterns" value="baseline and differential"/>
</dbReference>
<dbReference type="GO" id="GO:0005743">
    <property type="term" value="C:mitochondrial inner membrane"/>
    <property type="evidence" value="ECO:0000304"/>
    <property type="project" value="Reactome"/>
</dbReference>
<dbReference type="GO" id="GO:0005762">
    <property type="term" value="C:mitochondrial large ribosomal subunit"/>
    <property type="evidence" value="ECO:0000314"/>
    <property type="project" value="UniProtKB"/>
</dbReference>
<dbReference type="GO" id="GO:0005761">
    <property type="term" value="C:mitochondrial ribosome"/>
    <property type="evidence" value="ECO:0000314"/>
    <property type="project" value="UniProtKB"/>
</dbReference>
<dbReference type="GO" id="GO:0005739">
    <property type="term" value="C:mitochondrion"/>
    <property type="evidence" value="ECO:0000314"/>
    <property type="project" value="UniProtKB"/>
</dbReference>
<dbReference type="GO" id="GO:0003735">
    <property type="term" value="F:structural constituent of ribosome"/>
    <property type="evidence" value="ECO:0000250"/>
    <property type="project" value="UniProtKB"/>
</dbReference>
<dbReference type="GO" id="GO:0032543">
    <property type="term" value="P:mitochondrial translation"/>
    <property type="evidence" value="ECO:0000250"/>
    <property type="project" value="UniProtKB"/>
</dbReference>
<dbReference type="GO" id="GO:0006412">
    <property type="term" value="P:translation"/>
    <property type="evidence" value="ECO:0000250"/>
    <property type="project" value="UniProtKB"/>
</dbReference>
<dbReference type="InterPro" id="IPR019373">
    <property type="entry name" value="Ribosomal_mL51"/>
</dbReference>
<dbReference type="PANTHER" id="PTHR13409:SF0">
    <property type="entry name" value="LARGE RIBOSOMAL SUBUNIT PROTEIN ML51"/>
    <property type="match status" value="1"/>
</dbReference>
<dbReference type="PANTHER" id="PTHR13409">
    <property type="entry name" value="MITOCHONDRIAL 39S RIBOSOMAL PROTEIN L51"/>
    <property type="match status" value="1"/>
</dbReference>
<dbReference type="Pfam" id="PF10244">
    <property type="entry name" value="MRP-L51"/>
    <property type="match status" value="1"/>
</dbReference>
<proteinExistence type="evidence at protein level"/>
<sequence length="128" mass="15095">MAGNLLSGAGRRLWDWVPLACRSFSLGVPRLIGIRLTLPPPKVVDRWNEKRAMFGVYDNIGILGNFEKHPKELIRGPIWLRGWKGNELQRCIRKRKMVGSRMFADDLHNLNKRIRYLYKHFNRHGKFR</sequence>